<accession>Q5RHY1</accession>
<feature type="chain" id="PRO_0000278322" description="Protein MCM10 homolog">
    <location>
        <begin position="1"/>
        <end position="833"/>
    </location>
</feature>
<feature type="region of interest" description="N-terminal domain" evidence="1">
    <location>
        <begin position="1"/>
        <end position="122"/>
    </location>
</feature>
<feature type="region of interest" description="Disordered" evidence="5">
    <location>
        <begin position="18"/>
        <end position="208"/>
    </location>
</feature>
<feature type="region of interest" description="OB-fold domain" evidence="1">
    <location>
        <begin position="202"/>
        <end position="360"/>
    </location>
</feature>
<feature type="region of interest" description="Zinc finger-like 1">
    <location>
        <begin position="361"/>
        <end position="386"/>
    </location>
</feature>
<feature type="region of interest" description="Disordered" evidence="5">
    <location>
        <begin position="502"/>
        <end position="589"/>
    </location>
</feature>
<feature type="region of interest" description="Zinc finger-like 2" evidence="1">
    <location>
        <begin position="741"/>
        <end position="760"/>
    </location>
</feature>
<feature type="region of interest" description="Zinc finger-like 3" evidence="1">
    <location>
        <begin position="774"/>
        <end position="794"/>
    </location>
</feature>
<feature type="coiled-coil region" evidence="4">
    <location>
        <begin position="70"/>
        <end position="108"/>
    </location>
</feature>
<feature type="compositionally biased region" description="Acidic residues" evidence="5">
    <location>
        <begin position="18"/>
        <end position="64"/>
    </location>
</feature>
<feature type="compositionally biased region" description="Basic and acidic residues" evidence="5">
    <location>
        <begin position="75"/>
        <end position="93"/>
    </location>
</feature>
<feature type="compositionally biased region" description="Polar residues" evidence="5">
    <location>
        <begin position="115"/>
        <end position="126"/>
    </location>
</feature>
<feature type="compositionally biased region" description="Polar residues" evidence="5">
    <location>
        <begin position="165"/>
        <end position="179"/>
    </location>
</feature>
<feature type="compositionally biased region" description="Low complexity" evidence="5">
    <location>
        <begin position="502"/>
        <end position="516"/>
    </location>
</feature>
<feature type="compositionally biased region" description="Low complexity" evidence="5">
    <location>
        <begin position="571"/>
        <end position="583"/>
    </location>
</feature>
<gene>
    <name type="primary">mcm10</name>
    <name type="ORF">si:ch211-206k18.2</name>
</gene>
<organism>
    <name type="scientific">Danio rerio</name>
    <name type="common">Zebrafish</name>
    <name type="synonym">Brachydanio rerio</name>
    <dbReference type="NCBI Taxonomy" id="7955"/>
    <lineage>
        <taxon>Eukaryota</taxon>
        <taxon>Metazoa</taxon>
        <taxon>Chordata</taxon>
        <taxon>Craniata</taxon>
        <taxon>Vertebrata</taxon>
        <taxon>Euteleostomi</taxon>
        <taxon>Actinopterygii</taxon>
        <taxon>Neopterygii</taxon>
        <taxon>Teleostei</taxon>
        <taxon>Ostariophysi</taxon>
        <taxon>Cypriniformes</taxon>
        <taxon>Danionidae</taxon>
        <taxon>Danioninae</taxon>
        <taxon>Danio</taxon>
    </lineage>
</organism>
<protein>
    <recommendedName>
        <fullName>Protein MCM10 homolog</fullName>
    </recommendedName>
</protein>
<reference key="1">
    <citation type="journal article" date="2013" name="Nature">
        <title>The zebrafish reference genome sequence and its relationship to the human genome.</title>
        <authorList>
            <person name="Howe K."/>
            <person name="Clark M.D."/>
            <person name="Torroja C.F."/>
            <person name="Torrance J."/>
            <person name="Berthelot C."/>
            <person name="Muffato M."/>
            <person name="Collins J.E."/>
            <person name="Humphray S."/>
            <person name="McLaren K."/>
            <person name="Matthews L."/>
            <person name="McLaren S."/>
            <person name="Sealy I."/>
            <person name="Caccamo M."/>
            <person name="Churcher C."/>
            <person name="Scott C."/>
            <person name="Barrett J.C."/>
            <person name="Koch R."/>
            <person name="Rauch G.J."/>
            <person name="White S."/>
            <person name="Chow W."/>
            <person name="Kilian B."/>
            <person name="Quintais L.T."/>
            <person name="Guerra-Assuncao J.A."/>
            <person name="Zhou Y."/>
            <person name="Gu Y."/>
            <person name="Yen J."/>
            <person name="Vogel J.H."/>
            <person name="Eyre T."/>
            <person name="Redmond S."/>
            <person name="Banerjee R."/>
            <person name="Chi J."/>
            <person name="Fu B."/>
            <person name="Langley E."/>
            <person name="Maguire S.F."/>
            <person name="Laird G.K."/>
            <person name="Lloyd D."/>
            <person name="Kenyon E."/>
            <person name="Donaldson S."/>
            <person name="Sehra H."/>
            <person name="Almeida-King J."/>
            <person name="Loveland J."/>
            <person name="Trevanion S."/>
            <person name="Jones M."/>
            <person name="Quail M."/>
            <person name="Willey D."/>
            <person name="Hunt A."/>
            <person name="Burton J."/>
            <person name="Sims S."/>
            <person name="McLay K."/>
            <person name="Plumb B."/>
            <person name="Davis J."/>
            <person name="Clee C."/>
            <person name="Oliver K."/>
            <person name="Clark R."/>
            <person name="Riddle C."/>
            <person name="Elliot D."/>
            <person name="Threadgold G."/>
            <person name="Harden G."/>
            <person name="Ware D."/>
            <person name="Begum S."/>
            <person name="Mortimore B."/>
            <person name="Kerry G."/>
            <person name="Heath P."/>
            <person name="Phillimore B."/>
            <person name="Tracey A."/>
            <person name="Corby N."/>
            <person name="Dunn M."/>
            <person name="Johnson C."/>
            <person name="Wood J."/>
            <person name="Clark S."/>
            <person name="Pelan S."/>
            <person name="Griffiths G."/>
            <person name="Smith M."/>
            <person name="Glithero R."/>
            <person name="Howden P."/>
            <person name="Barker N."/>
            <person name="Lloyd C."/>
            <person name="Stevens C."/>
            <person name="Harley J."/>
            <person name="Holt K."/>
            <person name="Panagiotidis G."/>
            <person name="Lovell J."/>
            <person name="Beasley H."/>
            <person name="Henderson C."/>
            <person name="Gordon D."/>
            <person name="Auger K."/>
            <person name="Wright D."/>
            <person name="Collins J."/>
            <person name="Raisen C."/>
            <person name="Dyer L."/>
            <person name="Leung K."/>
            <person name="Robertson L."/>
            <person name="Ambridge K."/>
            <person name="Leongamornlert D."/>
            <person name="McGuire S."/>
            <person name="Gilderthorp R."/>
            <person name="Griffiths C."/>
            <person name="Manthravadi D."/>
            <person name="Nichol S."/>
            <person name="Barker G."/>
            <person name="Whitehead S."/>
            <person name="Kay M."/>
            <person name="Brown J."/>
            <person name="Murnane C."/>
            <person name="Gray E."/>
            <person name="Humphries M."/>
            <person name="Sycamore N."/>
            <person name="Barker D."/>
            <person name="Saunders D."/>
            <person name="Wallis J."/>
            <person name="Babbage A."/>
            <person name="Hammond S."/>
            <person name="Mashreghi-Mohammadi M."/>
            <person name="Barr L."/>
            <person name="Martin S."/>
            <person name="Wray P."/>
            <person name="Ellington A."/>
            <person name="Matthews N."/>
            <person name="Ellwood M."/>
            <person name="Woodmansey R."/>
            <person name="Clark G."/>
            <person name="Cooper J."/>
            <person name="Tromans A."/>
            <person name="Grafham D."/>
            <person name="Skuce C."/>
            <person name="Pandian R."/>
            <person name="Andrews R."/>
            <person name="Harrison E."/>
            <person name="Kimberley A."/>
            <person name="Garnett J."/>
            <person name="Fosker N."/>
            <person name="Hall R."/>
            <person name="Garner P."/>
            <person name="Kelly D."/>
            <person name="Bird C."/>
            <person name="Palmer S."/>
            <person name="Gehring I."/>
            <person name="Berger A."/>
            <person name="Dooley C.M."/>
            <person name="Ersan-Urun Z."/>
            <person name="Eser C."/>
            <person name="Geiger H."/>
            <person name="Geisler M."/>
            <person name="Karotki L."/>
            <person name="Kirn A."/>
            <person name="Konantz J."/>
            <person name="Konantz M."/>
            <person name="Oberlander M."/>
            <person name="Rudolph-Geiger S."/>
            <person name="Teucke M."/>
            <person name="Lanz C."/>
            <person name="Raddatz G."/>
            <person name="Osoegawa K."/>
            <person name="Zhu B."/>
            <person name="Rapp A."/>
            <person name="Widaa S."/>
            <person name="Langford C."/>
            <person name="Yang F."/>
            <person name="Schuster S.C."/>
            <person name="Carter N.P."/>
            <person name="Harrow J."/>
            <person name="Ning Z."/>
            <person name="Herrero J."/>
            <person name="Searle S.M."/>
            <person name="Enright A."/>
            <person name="Geisler R."/>
            <person name="Plasterk R.H."/>
            <person name="Lee C."/>
            <person name="Westerfield M."/>
            <person name="de Jong P.J."/>
            <person name="Zon L.I."/>
            <person name="Postlethwait J.H."/>
            <person name="Nusslein-Volhard C."/>
            <person name="Hubbard T.J."/>
            <person name="Roest Crollius H."/>
            <person name="Rogers J."/>
            <person name="Stemple D.L."/>
        </authorList>
    </citation>
    <scope>NUCLEOTIDE SEQUENCE [LARGE SCALE GENOMIC DNA]</scope>
    <source>
        <strain>Tuebingen</strain>
    </source>
</reference>
<keyword id="KW-0175">Coiled coil</keyword>
<keyword id="KW-0227">DNA damage</keyword>
<keyword id="KW-0235">DNA replication</keyword>
<keyword id="KW-0238">DNA-binding</keyword>
<keyword id="KW-0479">Metal-binding</keyword>
<keyword id="KW-0539">Nucleus</keyword>
<keyword id="KW-1185">Reference proteome</keyword>
<keyword id="KW-0862">Zinc</keyword>
<keyword id="KW-0863">Zinc-finger</keyword>
<dbReference type="EMBL" id="BX323869">
    <property type="protein sequence ID" value="CAI11761.1"/>
    <property type="molecule type" value="Genomic_DNA"/>
</dbReference>
<dbReference type="RefSeq" id="NP_001019984.1">
    <property type="nucleotide sequence ID" value="NM_001024813.1"/>
</dbReference>
<dbReference type="SMR" id="Q5RHY1"/>
<dbReference type="FunCoup" id="Q5RHY1">
    <property type="interactions" value="1682"/>
</dbReference>
<dbReference type="STRING" id="7955.ENSDARP00000067338"/>
<dbReference type="PaxDb" id="7955-ENSDARP00000067338"/>
<dbReference type="Ensembl" id="ENSDART00000067339">
    <property type="protein sequence ID" value="ENSDARP00000067338"/>
    <property type="gene ID" value="ENSDARG00000045815"/>
</dbReference>
<dbReference type="GeneID" id="553396"/>
<dbReference type="KEGG" id="dre:553396"/>
<dbReference type="AGR" id="ZFIN:ZDB-GENE-041210-42"/>
<dbReference type="CTD" id="55388"/>
<dbReference type="ZFIN" id="ZDB-GENE-041210-42">
    <property type="gene designation" value="mcm10"/>
</dbReference>
<dbReference type="eggNOG" id="KOG3056">
    <property type="taxonomic scope" value="Eukaryota"/>
</dbReference>
<dbReference type="HOGENOM" id="CLU_014680_0_0_1"/>
<dbReference type="InParanoid" id="Q5RHY1"/>
<dbReference type="OMA" id="YKMPCKA"/>
<dbReference type="OrthoDB" id="273123at2759"/>
<dbReference type="PhylomeDB" id="Q5RHY1"/>
<dbReference type="TreeFam" id="TF313330"/>
<dbReference type="PRO" id="PR:Q5RHY1"/>
<dbReference type="Proteomes" id="UP000000437">
    <property type="component" value="Chromosome 4"/>
</dbReference>
<dbReference type="Bgee" id="ENSDARG00000045815">
    <property type="expression patterns" value="Expressed in mature ovarian follicle and 17 other cell types or tissues"/>
</dbReference>
<dbReference type="ExpressionAtlas" id="Q5RHY1">
    <property type="expression patterns" value="baseline and differential"/>
</dbReference>
<dbReference type="GO" id="GO:0043596">
    <property type="term" value="C:nuclear replication fork"/>
    <property type="evidence" value="ECO:0000318"/>
    <property type="project" value="GO_Central"/>
</dbReference>
<dbReference type="GO" id="GO:0005634">
    <property type="term" value="C:nucleus"/>
    <property type="evidence" value="ECO:0000250"/>
    <property type="project" value="UniProtKB"/>
</dbReference>
<dbReference type="GO" id="GO:0003688">
    <property type="term" value="F:DNA replication origin binding"/>
    <property type="evidence" value="ECO:0000318"/>
    <property type="project" value="GO_Central"/>
</dbReference>
<dbReference type="GO" id="GO:0003697">
    <property type="term" value="F:single-stranded DNA binding"/>
    <property type="evidence" value="ECO:0000318"/>
    <property type="project" value="GO_Central"/>
</dbReference>
<dbReference type="GO" id="GO:0008270">
    <property type="term" value="F:zinc ion binding"/>
    <property type="evidence" value="ECO:0007669"/>
    <property type="project" value="UniProtKB-KW"/>
</dbReference>
<dbReference type="GO" id="GO:0006974">
    <property type="term" value="P:DNA damage response"/>
    <property type="evidence" value="ECO:0007669"/>
    <property type="project" value="UniProtKB-KW"/>
</dbReference>
<dbReference type="GO" id="GO:0006270">
    <property type="term" value="P:DNA replication initiation"/>
    <property type="evidence" value="ECO:0000318"/>
    <property type="project" value="GO_Central"/>
</dbReference>
<dbReference type="FunFam" id="2.40.50.140:FF:000167">
    <property type="entry name" value="Minichromosome maintenance 10 replication initiation factor"/>
    <property type="match status" value="1"/>
</dbReference>
<dbReference type="Gene3D" id="2.40.50.140">
    <property type="entry name" value="Nucleic acid-binding proteins"/>
    <property type="match status" value="1"/>
</dbReference>
<dbReference type="InterPro" id="IPR040184">
    <property type="entry name" value="Mcm10"/>
</dbReference>
<dbReference type="InterPro" id="IPR055065">
    <property type="entry name" value="MCM10_OB"/>
</dbReference>
<dbReference type="InterPro" id="IPR012340">
    <property type="entry name" value="NA-bd_OB-fold"/>
</dbReference>
<dbReference type="InterPro" id="IPR015411">
    <property type="entry name" value="Rep_factor_Mcm10_C"/>
</dbReference>
<dbReference type="InterPro" id="IPR015408">
    <property type="entry name" value="Znf_Mcm10/DnaG"/>
</dbReference>
<dbReference type="InterPro" id="IPR056791">
    <property type="entry name" value="Znf_Mcm10_C"/>
</dbReference>
<dbReference type="PANTHER" id="PTHR13454">
    <property type="entry name" value="PROTEIN MCM10 HOMOLOG"/>
    <property type="match status" value="1"/>
</dbReference>
<dbReference type="PANTHER" id="PTHR13454:SF11">
    <property type="entry name" value="PROTEIN MCM10 HOMOLOG"/>
    <property type="match status" value="1"/>
</dbReference>
<dbReference type="Pfam" id="PF09332">
    <property type="entry name" value="Mcm10"/>
    <property type="match status" value="1"/>
</dbReference>
<dbReference type="Pfam" id="PF22379">
    <property type="entry name" value="MCM10_OB"/>
    <property type="match status" value="1"/>
</dbReference>
<dbReference type="Pfam" id="PF24863">
    <property type="entry name" value="zf-CCCH_Mcm10"/>
    <property type="match status" value="1"/>
</dbReference>
<dbReference type="Pfam" id="PF09329">
    <property type="entry name" value="zf-primase"/>
    <property type="match status" value="1"/>
</dbReference>
<dbReference type="SMART" id="SM01280">
    <property type="entry name" value="Mcm10"/>
    <property type="match status" value="1"/>
</dbReference>
<comment type="function">
    <text evidence="3">Acts as a replication initiation factor that brings together the MCM2-7 helicase and the DNA polymerase alpha/primase complex in order to initiate DNA replication. Additionally, plays a role in preventing DNA damage during replication (By similarity).</text>
</comment>
<comment type="subunit">
    <text evidence="2">Self-associates.</text>
</comment>
<comment type="subcellular location">
    <subcellularLocation>
        <location evidence="2">Nucleus</location>
    </subcellularLocation>
</comment>
<comment type="domain">
    <text evidence="2">Each zinc finger-like domain binds a zinc ion and is involved in both ssDNA and dsDNA binding, as is the OB-fold domain.</text>
</comment>
<comment type="domain">
    <text evidence="1">The N-terminal domain mediates homodimerization.</text>
</comment>
<comment type="similarity">
    <text evidence="6">Belongs to the MCM10 family.</text>
</comment>
<name>MCM10_DANRE</name>
<sequence length="833" mass="92439">MTEEENLDMLLSLFAESEGQDLESPAAEEGEDNLDDLFDEDDDGEQYIEPEEAEEEKEEEEEEVSPGKSSSSDLNKSKEDLEAELKLMQEKMQKLQQQLEASQKTTPAQNKPAVQRQSTKSLTSPQAGVKTTPPTVRDSDGSPSNITAKLKNKQRTAHQPKAASSERQIPIGQSTNQPQPMRDGAKVNSMLKSPPLIKTPPTVRQPTPRLPVNQEVAVEKFSGLRLRKPRLSSIDIEQKMASRKLIRLSQLPDRLARDNLEDSDWVTFAVIINKITPQSKNNGKTFSIWKLNDLHNLEVNVSLFLFGSVHTDLWKTDTGTVIGILNPNPMKNKEGSNELSLTVDHPQKVLIIGEAMDFGTCKAKKKNGDSCTQLVNLYECQFCQYHVKAQYKKMSSKRAELQSSFTGSAPGKGRGRGSLKERLCQSDFHYGGMSSLACAPSMSAPQPKKQPTIQSALASIPTKKLVLNSGQVSGCSDDFRGLMSMPTPGALNIKRHLGQSKSSAVAGSSVQSVSASDLLKQQKEQHQQRMMARKKRAEEIQKRVLQSGGAPVASSRPNVSRGPLLSPKAASEGPKGSGSSLSGPAVPTLGRGFSEGEDIVFDMSPPSSKSLSATKLAAVRKLQAKGSVIVKEDPNAVKRKRANSGDITGRVERNIVKAKVTDENSASEEEEPAMKKRREQLEYIQSEEFQRILNAKSSNSWMMGEIEERAMQEYFEPLVQKEKMEEKMKSIREMKCRAVTCKTCKYTHFKPADRCVEEKHDYHWHDAVKRFFKCPCGQRKICLARMPHGACSHCGLFKWERDGMLKEKKGPKIGGELLMPRGEEQPKFLNSLK</sequence>
<proteinExistence type="inferred from homology"/>
<evidence type="ECO:0000250" key="1"/>
<evidence type="ECO:0000250" key="2">
    <source>
        <dbReference type="UniProtKB" id="Q5EAW4"/>
    </source>
</evidence>
<evidence type="ECO:0000250" key="3">
    <source>
        <dbReference type="UniProtKB" id="Q7L590"/>
    </source>
</evidence>
<evidence type="ECO:0000255" key="4"/>
<evidence type="ECO:0000256" key="5">
    <source>
        <dbReference type="SAM" id="MobiDB-lite"/>
    </source>
</evidence>
<evidence type="ECO:0000305" key="6"/>